<sequence>MRGELPNKHHSYTFFVFLFFFLILFPDLSISVNTLSATESLTISSNKTIVSPGGVFELGFFRILGDSWYLGIWYKKISQRTYVWVANRDTPLSNPIGILKISNANLVILDNSDTHVWSTNLTGAVRSSVVAELLDNGNFVLRGSKINESDEFLWQSFDFPTDTLLPQMKLGRDHKRGLNRFVTSWKSSFDPSSGSFMFKLETLGLPEFFGFTSFLEVYRSGPWDGLRFSGILEMQQWDDIIYNFTENREEVAYTFRVTDHNSYSRLTINTVGRLEGFMWEPTQQEWNMFWFMPKDTCDLYGICGPYAYCDMSTSPTCNCIKGFQPLSPQDWASGDVTGRCRRKTQLTCGEDRFFRLMNMKIPATTAAIVDKRIGLKECEEKCKTHCNCTAYANSDIRNGGSGCIIWIGEFRDIRNYAADGQDLFVRLAAAEFGERRTIRGKIIGLIIGISLMLVLSFIIYCFWKKKQKRARATAAPIGYRDRIQELIITNGVVMSSGRRLLGEEEDLELPLTEFETVVMATENFSDSNILGRGGFGIVYKGRLLDGQEIAVKRLSEMSSQGTNEFKNEVRLIARLQHINLVRLLSCCIYADEKILIYEYLENGSLDSHLFETTQSSNKLNWQTRFSIINGIARGLLYLHQDSRFKIIHRDLKASNVLLDKNMTPKISDFGMARIFERDETEANTRKVVGTYGYMSPEYAMEGIFSVKSDVFSFGVLVLEIVSGKRNRGFHNSGQDNNLLGYTWENWKEGKGLEIVDSIIVDSSSSMSLFQPHEVLRCIQIGLLCVQERAEDRPKMSSVVLMLGSEKGEIPQPKRPGYCVGRSSLDTADSSSSTKRDSESLTVNQITVSVINAR</sequence>
<name>SRK_ARATH</name>
<organism>
    <name type="scientific">Arabidopsis thaliana</name>
    <name type="common">Mouse-ear cress</name>
    <dbReference type="NCBI Taxonomy" id="3702"/>
    <lineage>
        <taxon>Eukaryota</taxon>
        <taxon>Viridiplantae</taxon>
        <taxon>Streptophyta</taxon>
        <taxon>Embryophyta</taxon>
        <taxon>Tracheophyta</taxon>
        <taxon>Spermatophyta</taxon>
        <taxon>Magnoliopsida</taxon>
        <taxon>eudicotyledons</taxon>
        <taxon>Gunneridae</taxon>
        <taxon>Pentapetalae</taxon>
        <taxon>rosids</taxon>
        <taxon>malvids</taxon>
        <taxon>Brassicales</taxon>
        <taxon>Brassicaceae</taxon>
        <taxon>Camelineae</taxon>
        <taxon>Arabidopsis</taxon>
    </lineage>
</organism>
<feature type="signal peptide" evidence="3">
    <location>
        <begin position="1"/>
        <end position="31"/>
    </location>
</feature>
<feature type="chain" id="PRO_0000401305" description="G-type lectin S-receptor-like serine/threonine-protein kinase SRK">
    <location>
        <begin position="32"/>
        <end position="853"/>
    </location>
</feature>
<feature type="topological domain" description="Extracellular" evidence="3">
    <location>
        <begin position="32"/>
        <end position="441"/>
    </location>
</feature>
<feature type="transmembrane region" description="Helical" evidence="3">
    <location>
        <begin position="442"/>
        <end position="462"/>
    </location>
</feature>
<feature type="topological domain" description="Cytoplasmic" evidence="3">
    <location>
        <begin position="463"/>
        <end position="853"/>
    </location>
</feature>
<feature type="domain" description="Bulb-type lectin" evidence="4">
    <location>
        <begin position="34"/>
        <end position="154"/>
    </location>
</feature>
<feature type="domain" description="EGF-like; atypical">
    <location>
        <begin position="293"/>
        <end position="329"/>
    </location>
</feature>
<feature type="domain" description="PAN" evidence="6">
    <location>
        <begin position="348"/>
        <end position="428"/>
    </location>
</feature>
<feature type="domain" description="Protein kinase" evidence="5">
    <location>
        <begin position="524"/>
        <end position="802"/>
    </location>
</feature>
<feature type="region of interest" description="CaM-binding" evidence="1">
    <location>
        <begin position="613"/>
        <end position="631"/>
    </location>
</feature>
<feature type="region of interest" description="Disordered" evidence="8">
    <location>
        <begin position="807"/>
        <end position="838"/>
    </location>
</feature>
<feature type="compositionally biased region" description="Low complexity" evidence="8">
    <location>
        <begin position="822"/>
        <end position="832"/>
    </location>
</feature>
<feature type="active site" description="Proton acceptor" evidence="5 7">
    <location>
        <position position="650"/>
    </location>
</feature>
<feature type="binding site" evidence="5">
    <location>
        <begin position="530"/>
        <end position="538"/>
    </location>
    <ligand>
        <name>ATP</name>
        <dbReference type="ChEBI" id="CHEBI:30616"/>
    </ligand>
</feature>
<feature type="binding site" evidence="5">
    <location>
        <position position="552"/>
    </location>
    <ligand>
        <name>ATP</name>
        <dbReference type="ChEBI" id="CHEBI:30616"/>
    </ligand>
</feature>
<feature type="modified residue" description="Phosphoserine" evidence="2">
    <location>
        <position position="558"/>
    </location>
</feature>
<feature type="modified residue" description="Phosphoserine" evidence="2">
    <location>
        <position position="654"/>
    </location>
</feature>
<feature type="modified residue" description="Phosphoserine" evidence="2">
    <location>
        <position position="667"/>
    </location>
</feature>
<feature type="modified residue" description="Phosphothreonine" evidence="2">
    <location>
        <position position="684"/>
    </location>
</feature>
<feature type="modified residue" description="Phosphoserine" evidence="2">
    <location>
        <position position="831"/>
    </location>
</feature>
<feature type="glycosylation site" description="N-linked (GlcNAc...) asparagine" evidence="3">
    <location>
        <position position="46"/>
    </location>
</feature>
<feature type="glycosylation site" description="N-linked (GlcNAc...) asparagine" evidence="3">
    <location>
        <position position="120"/>
    </location>
</feature>
<feature type="glycosylation site" description="N-linked (GlcNAc...) asparagine" evidence="3">
    <location>
        <position position="147"/>
    </location>
</feature>
<feature type="glycosylation site" description="N-linked (GlcNAc...) asparagine" evidence="3">
    <location>
        <position position="243"/>
    </location>
</feature>
<feature type="glycosylation site" description="N-linked (GlcNAc...) asparagine" evidence="3">
    <location>
        <position position="387"/>
    </location>
</feature>
<feature type="disulfide bond" evidence="1">
    <location>
        <begin position="297"/>
        <end position="309"/>
    </location>
</feature>
<feature type="disulfide bond" evidence="1">
    <location>
        <begin position="303"/>
        <end position="317"/>
    </location>
</feature>
<feature type="disulfide bond" evidence="1">
    <location>
        <begin position="378"/>
        <end position="403"/>
    </location>
</feature>
<feature type="disulfide bond" evidence="1">
    <location>
        <begin position="382"/>
        <end position="388"/>
    </location>
</feature>
<feature type="sequence variant" description="In strain: cv. Ge-1." evidence="13">
    <original>S</original>
    <variation>N</variation>
    <location>
        <position position="45"/>
    </location>
</feature>
<feature type="sequence variant" description="In strain: cv. Ge-1." evidence="13">
    <original>N</original>
    <variation>Y</variation>
    <location>
        <position position="269"/>
    </location>
</feature>
<feature type="sequence variant" description="In strain: cv. Old-1, cv. Uk-3 and cv. Wassilewskija." evidence="13">
    <original>M</original>
    <variation>T</variation>
    <location>
        <position position="278"/>
    </location>
</feature>
<feature type="sequence variant" description="In strain: cv. Nok-0." evidence="12">
    <original>I</original>
    <variation>T</variation>
    <location>
        <position position="373"/>
    </location>
</feature>
<feature type="sequence variant" description="In strain: cv. Ca-0 and cv. Co." evidence="13">
    <original>N</original>
    <variation>K</variation>
    <location>
        <position position="415"/>
    </location>
</feature>
<feature type="sequence variant" description="In strain: cv. Fi-1." evidence="13">
    <original>G</original>
    <variation>A</variation>
    <location>
        <position position="420"/>
    </location>
</feature>
<feature type="sequence variant" description="In strain: cv. Old-1, cv. Uk-3 and cv. Wassilewskija." evidence="13">
    <original>I</original>
    <variation>S</variation>
    <location>
        <position position="438"/>
    </location>
</feature>
<feature type="sequence variant" description="In strain: cv. Ca-0." evidence="13">
    <original>T</original>
    <variation>I</variation>
    <location>
        <position position="562"/>
    </location>
</feature>
<feature type="sequence variant" description="In strain: cv. Di-1, cv. Fi-1, cv. Gie, cv. Old-1, cv. Uk-3 and cv. Wassilewskija." evidence="13">
    <original>T</original>
    <variation>R</variation>
    <location>
        <position position="612"/>
    </location>
</feature>
<feature type="sequence variant" description="In strain: cv. Ca-0." evidence="13">
    <original>G</original>
    <variation>D</variation>
    <location>
        <position position="630"/>
    </location>
</feature>
<feature type="sequence variant" description="In strain: cv. Di-1, cv. Fi-1, cv. Gie, cv. Old-1, cv. Uk-3 and cv. Wassilewskija." evidence="13">
    <original>E</original>
    <variation>Q</variation>
    <location>
        <position position="676"/>
    </location>
</feature>
<feature type="sequence variant" description="In strain: cv. Fi-1, cv. Gie, cv. Old-1, cv. Uk-3 and cv. Wassilewskija." evidence="13">
    <location>
        <begin position="829"/>
        <end position="837"/>
    </location>
</feature>
<dbReference type="EC" id="2.7.11.1"/>
<dbReference type="EMBL" id="EF692484">
    <property type="protein sequence ID" value="ABU54597.1"/>
    <property type="molecule type" value="Genomic_DNA"/>
</dbReference>
<dbReference type="EMBL" id="EF692485">
    <property type="protein sequence ID" value="ABU54598.1"/>
    <property type="molecule type" value="Genomic_DNA"/>
</dbReference>
<dbReference type="EMBL" id="EF692488">
    <property type="protein sequence ID" value="ABU54595.1"/>
    <property type="molecule type" value="mRNA"/>
</dbReference>
<dbReference type="EMBL" id="EF692489">
    <property type="protein sequence ID" value="ABU54596.1"/>
    <property type="molecule type" value="mRNA"/>
</dbReference>
<dbReference type="EMBL" id="GU723782">
    <property type="protein sequence ID" value="ADG01645.1"/>
    <property type="molecule type" value="mRNA"/>
</dbReference>
<dbReference type="EMBL" id="GU723783">
    <property type="protein sequence ID" value="ADG01646.1"/>
    <property type="molecule type" value="mRNA"/>
</dbReference>
<dbReference type="EMBL" id="GU723784">
    <property type="protein sequence ID" value="ADG01647.1"/>
    <property type="molecule type" value="mRNA"/>
</dbReference>
<dbReference type="EMBL" id="GU723785">
    <property type="protein sequence ID" value="ADG01648.1"/>
    <property type="molecule type" value="mRNA"/>
</dbReference>
<dbReference type="EMBL" id="GU723786">
    <property type="protein sequence ID" value="ADG01649.1"/>
    <property type="molecule type" value="mRNA"/>
</dbReference>
<dbReference type="EMBL" id="GU723787">
    <property type="protein sequence ID" value="ADG01650.1"/>
    <property type="molecule type" value="mRNA"/>
</dbReference>
<dbReference type="EMBL" id="GU723788">
    <property type="protein sequence ID" value="ADG01651.1"/>
    <property type="molecule type" value="mRNA"/>
</dbReference>
<dbReference type="EMBL" id="GU723789">
    <property type="protein sequence ID" value="ADG01652.1"/>
    <property type="molecule type" value="mRNA"/>
</dbReference>
<dbReference type="EMBL" id="GU723790">
    <property type="protein sequence ID" value="ADG01653.1"/>
    <property type="molecule type" value="mRNA"/>
</dbReference>
<dbReference type="EMBL" id="GU723791">
    <property type="protein sequence ID" value="ADG01654.1"/>
    <property type="molecule type" value="mRNA"/>
</dbReference>
<dbReference type="EMBL" id="GU723866">
    <property type="protein sequence ID" value="ADG01729.1"/>
    <property type="molecule type" value="Genomic_DNA"/>
</dbReference>
<dbReference type="EMBL" id="GU723867">
    <property type="protein sequence ID" value="ADG01730.1"/>
    <property type="molecule type" value="Genomic_DNA"/>
</dbReference>
<dbReference type="EMBL" id="GU723870">
    <property type="protein sequence ID" value="ADG01731.1"/>
    <property type="molecule type" value="Genomic_DNA"/>
</dbReference>
<dbReference type="EMBL" id="GU723871">
    <property type="protein sequence ID" value="ADG01732.1"/>
    <property type="molecule type" value="Genomic_DNA"/>
</dbReference>
<dbReference type="EMBL" id="GU723872">
    <property type="protein sequence ID" value="ADG01733.1"/>
    <property type="molecule type" value="Genomic_DNA"/>
</dbReference>
<dbReference type="EMBL" id="GU723873">
    <property type="protein sequence ID" value="ADG01734.1"/>
    <property type="molecule type" value="Genomic_DNA"/>
</dbReference>
<dbReference type="EMBL" id="GU723874">
    <property type="protein sequence ID" value="ADG01735.1"/>
    <property type="molecule type" value="Genomic_DNA"/>
</dbReference>
<dbReference type="EMBL" id="GU723875">
    <property type="protein sequence ID" value="ADG01736.1"/>
    <property type="molecule type" value="Genomic_DNA"/>
</dbReference>
<dbReference type="EMBL" id="GU723876">
    <property type="protein sequence ID" value="ADG01737.1"/>
    <property type="molecule type" value="Genomic_DNA"/>
</dbReference>
<dbReference type="EMBL" id="GU723877">
    <property type="protein sequence ID" value="ADG01738.1"/>
    <property type="molecule type" value="Genomic_DNA"/>
</dbReference>
<dbReference type="SMR" id="P0DH86"/>
<dbReference type="TCDB" id="1.A.87.2.16">
    <property type="family name" value="the mechanosensitive calcium channel (mca) family"/>
</dbReference>
<dbReference type="GlyCosmos" id="P0DH86">
    <property type="glycosylation" value="5 sites, No reported glycans"/>
</dbReference>
<dbReference type="ExpressionAtlas" id="P0DH86">
    <property type="expression patterns" value="baseline and differential"/>
</dbReference>
<dbReference type="GO" id="GO:0005886">
    <property type="term" value="C:plasma membrane"/>
    <property type="evidence" value="ECO:0007669"/>
    <property type="project" value="UniProtKB-SubCell"/>
</dbReference>
<dbReference type="GO" id="GO:0005524">
    <property type="term" value="F:ATP binding"/>
    <property type="evidence" value="ECO:0007669"/>
    <property type="project" value="UniProtKB-KW"/>
</dbReference>
<dbReference type="GO" id="GO:0005516">
    <property type="term" value="F:calmodulin binding"/>
    <property type="evidence" value="ECO:0000250"/>
    <property type="project" value="UniProtKB"/>
</dbReference>
<dbReference type="GO" id="GO:0030246">
    <property type="term" value="F:carbohydrate binding"/>
    <property type="evidence" value="ECO:0007669"/>
    <property type="project" value="UniProtKB-KW"/>
</dbReference>
<dbReference type="GO" id="GO:0106310">
    <property type="term" value="F:protein serine kinase activity"/>
    <property type="evidence" value="ECO:0007669"/>
    <property type="project" value="RHEA"/>
</dbReference>
<dbReference type="GO" id="GO:0004674">
    <property type="term" value="F:protein serine/threonine kinase activity"/>
    <property type="evidence" value="ECO:0000250"/>
    <property type="project" value="UniProtKB"/>
</dbReference>
<dbReference type="GO" id="GO:0031625">
    <property type="term" value="F:ubiquitin protein ligase binding"/>
    <property type="evidence" value="ECO:0007669"/>
    <property type="project" value="UniProtKB-ARBA"/>
</dbReference>
<dbReference type="GO" id="GO:0042742">
    <property type="term" value="P:defense response to bacterium"/>
    <property type="evidence" value="ECO:0000250"/>
    <property type="project" value="UniProtKB"/>
</dbReference>
<dbReference type="GO" id="GO:0046777">
    <property type="term" value="P:protein autophosphorylation"/>
    <property type="evidence" value="ECO:0000250"/>
    <property type="project" value="UniProtKB"/>
</dbReference>
<dbReference type="GO" id="GO:0048544">
    <property type="term" value="P:recognition of pollen"/>
    <property type="evidence" value="ECO:0007669"/>
    <property type="project" value="InterPro"/>
</dbReference>
<dbReference type="CDD" id="cd00028">
    <property type="entry name" value="B_lectin"/>
    <property type="match status" value="1"/>
</dbReference>
<dbReference type="CDD" id="cd01098">
    <property type="entry name" value="PAN_AP_plant"/>
    <property type="match status" value="1"/>
</dbReference>
<dbReference type="CDD" id="cd14066">
    <property type="entry name" value="STKc_IRAK"/>
    <property type="match status" value="1"/>
</dbReference>
<dbReference type="FunFam" id="1.10.510.10:FF:000060">
    <property type="entry name" value="G-type lectin S-receptor-like serine/threonine-protein kinase"/>
    <property type="match status" value="1"/>
</dbReference>
<dbReference type="FunFam" id="3.30.200.20:FF:000195">
    <property type="entry name" value="G-type lectin S-receptor-like serine/threonine-protein kinase"/>
    <property type="match status" value="1"/>
</dbReference>
<dbReference type="FunFam" id="2.90.10.10:FF:000047">
    <property type="entry name" value="Putative inactive G-type lectin S-receptor-like serine/threonine-protein kinase SRK"/>
    <property type="match status" value="1"/>
</dbReference>
<dbReference type="Gene3D" id="2.90.10.10">
    <property type="entry name" value="Bulb-type lectin domain"/>
    <property type="match status" value="1"/>
</dbReference>
<dbReference type="Gene3D" id="3.30.200.20">
    <property type="entry name" value="Phosphorylase Kinase, domain 1"/>
    <property type="match status" value="1"/>
</dbReference>
<dbReference type="Gene3D" id="1.10.510.10">
    <property type="entry name" value="Transferase(Phosphotransferase) domain 1"/>
    <property type="match status" value="1"/>
</dbReference>
<dbReference type="InterPro" id="IPR001480">
    <property type="entry name" value="Bulb-type_lectin_dom"/>
</dbReference>
<dbReference type="InterPro" id="IPR036426">
    <property type="entry name" value="Bulb-type_lectin_dom_sf"/>
</dbReference>
<dbReference type="InterPro" id="IPR011009">
    <property type="entry name" value="Kinase-like_dom_sf"/>
</dbReference>
<dbReference type="InterPro" id="IPR003609">
    <property type="entry name" value="Pan_app"/>
</dbReference>
<dbReference type="InterPro" id="IPR000719">
    <property type="entry name" value="Prot_kinase_dom"/>
</dbReference>
<dbReference type="InterPro" id="IPR017441">
    <property type="entry name" value="Protein_kinase_ATP_BS"/>
</dbReference>
<dbReference type="InterPro" id="IPR022126">
    <property type="entry name" value="S-locus_recpt_kinase"/>
</dbReference>
<dbReference type="InterPro" id="IPR021820">
    <property type="entry name" value="S-locus_recpt_kinase_C"/>
</dbReference>
<dbReference type="InterPro" id="IPR000858">
    <property type="entry name" value="S_locus_glycoprot_dom"/>
</dbReference>
<dbReference type="InterPro" id="IPR001245">
    <property type="entry name" value="Ser-Thr/Tyr_kinase_cat_dom"/>
</dbReference>
<dbReference type="InterPro" id="IPR008271">
    <property type="entry name" value="Ser/Thr_kinase_AS"/>
</dbReference>
<dbReference type="InterPro" id="IPR024171">
    <property type="entry name" value="SRK-like_kinase"/>
</dbReference>
<dbReference type="PANTHER" id="PTHR27002:SF956">
    <property type="entry name" value="PROTEIN KINASE DOMAIN-CONTAINING PROTEIN"/>
    <property type="match status" value="1"/>
</dbReference>
<dbReference type="PANTHER" id="PTHR27002">
    <property type="entry name" value="RECEPTOR-LIKE SERINE/THREONINE-PROTEIN KINASE SD1-8"/>
    <property type="match status" value="1"/>
</dbReference>
<dbReference type="Pfam" id="PF01453">
    <property type="entry name" value="B_lectin"/>
    <property type="match status" value="1"/>
</dbReference>
<dbReference type="Pfam" id="PF11883">
    <property type="entry name" value="DUF3403"/>
    <property type="match status" value="1"/>
</dbReference>
<dbReference type="Pfam" id="PF12398">
    <property type="entry name" value="DUF3660"/>
    <property type="match status" value="1"/>
</dbReference>
<dbReference type="Pfam" id="PF08276">
    <property type="entry name" value="PAN_2"/>
    <property type="match status" value="1"/>
</dbReference>
<dbReference type="Pfam" id="PF07714">
    <property type="entry name" value="PK_Tyr_Ser-Thr"/>
    <property type="match status" value="1"/>
</dbReference>
<dbReference type="Pfam" id="PF00954">
    <property type="entry name" value="S_locus_glycop"/>
    <property type="match status" value="1"/>
</dbReference>
<dbReference type="PIRSF" id="PIRSF000641">
    <property type="entry name" value="SRK"/>
    <property type="match status" value="1"/>
</dbReference>
<dbReference type="SMART" id="SM00108">
    <property type="entry name" value="B_lectin"/>
    <property type="match status" value="1"/>
</dbReference>
<dbReference type="SMART" id="SM00473">
    <property type="entry name" value="PAN_AP"/>
    <property type="match status" value="1"/>
</dbReference>
<dbReference type="SMART" id="SM00220">
    <property type="entry name" value="S_TKc"/>
    <property type="match status" value="1"/>
</dbReference>
<dbReference type="SUPFAM" id="SSF51110">
    <property type="entry name" value="alpha-D-mannose-specific plant lectins"/>
    <property type="match status" value="1"/>
</dbReference>
<dbReference type="SUPFAM" id="SSF56112">
    <property type="entry name" value="Protein kinase-like (PK-like)"/>
    <property type="match status" value="1"/>
</dbReference>
<dbReference type="PROSITE" id="PS50927">
    <property type="entry name" value="BULB_LECTIN"/>
    <property type="match status" value="1"/>
</dbReference>
<dbReference type="PROSITE" id="PS50948">
    <property type="entry name" value="PAN"/>
    <property type="match status" value="1"/>
</dbReference>
<dbReference type="PROSITE" id="PS00107">
    <property type="entry name" value="PROTEIN_KINASE_ATP"/>
    <property type="match status" value="1"/>
</dbReference>
<dbReference type="PROSITE" id="PS50011">
    <property type="entry name" value="PROTEIN_KINASE_DOM"/>
    <property type="match status" value="1"/>
</dbReference>
<dbReference type="PROSITE" id="PS00108">
    <property type="entry name" value="PROTEIN_KINASE_ST"/>
    <property type="match status" value="1"/>
</dbReference>
<reference key="1">
    <citation type="journal article" date="2008" name="Mol. Ecol.">
        <title>Independent origins of self-compatibility in Arabidopsis thaliana.</title>
        <authorList>
            <person name="Shimizu K.K."/>
            <person name="Shimizu-Inatsugi R."/>
            <person name="Tsuchimatsu T."/>
            <person name="Purugganan M.D."/>
        </authorList>
    </citation>
    <scope>NUCLEOTIDE SEQUENCE [GENOMIC DNA / MRNA]</scope>
    <scope>VARIANT THR-373</scope>
    <source>
        <strain>cv. Nok-0</strain>
        <strain>cv. Pog-0</strain>
    </source>
</reference>
<reference key="2">
    <citation type="journal article" date="2010" name="Nature">
        <title>Evolution of self-compatibility in Arabidopsis by a mutation in the male specificity gene.</title>
        <authorList>
            <person name="Tsuchimatsu T."/>
            <person name="Suwabe K."/>
            <person name="Shimizu-Inatsugi R."/>
            <person name="Isokawa S."/>
            <person name="Pavlidis P."/>
            <person name="Stadler T."/>
            <person name="Suzuki G."/>
            <person name="Takayama S."/>
            <person name="Watanabe M."/>
            <person name="Shimizu K.K."/>
        </authorList>
    </citation>
    <scope>NUCLEOTIDE SEQUENCE [GENOMIC DNA / MRNA]</scope>
    <scope>VARIANTS ASN-45; TYR-269; THR-278; LYS-415; ALA-420; SER-438; ILE-562; ARG-612; ASP-630; GLN-676 AND 829-SER--SER-837 DEL</scope>
    <scope>FUNCTION</scope>
    <source>
        <strain>cv. Ca-0</strain>
        <strain>cv. Co</strain>
        <strain>cv. Di-1</strain>
        <strain>cv. Fi-1</strain>
        <strain>cv. Ge-1</strain>
        <strain>cv. Gie</strain>
        <strain>cv. Old-1</strain>
        <strain>cv. Uk-3</strain>
        <strain>cv. Wassilewskija</strain>
        <strain>cv. Wei-1</strain>
    </source>
</reference>
<reference key="3">
    <citation type="journal article" date="2004" name="Proc. Natl. Acad. Sci. U.S.A.">
        <title>Natural variation in expression of self-incompatibility in Arabidopsis thaliana: implications for the evolution of selfing.</title>
        <authorList>
            <person name="Nasrallah M.E."/>
            <person name="Liu P."/>
            <person name="Sherman-Broyles S."/>
            <person name="Boggs N.A."/>
            <person name="Nasrallah J.B."/>
        </authorList>
    </citation>
    <scope>FUNCTION</scope>
</reference>
<reference key="4">
    <citation type="journal article" date="2007" name="Plant Cell">
        <title>S locus genes and the evolution of self-fertility in Arabidopsis thaliana.</title>
        <authorList>
            <person name="Sherman-Broyles S."/>
            <person name="Boggs N."/>
            <person name="Farkas A."/>
            <person name="Liu P."/>
            <person name="Vrebalov J."/>
            <person name="Nasrallah M.E."/>
            <person name="Nasrallah J.B."/>
        </authorList>
    </citation>
    <scope>FUNCTION</scope>
    <scope>REVIEW</scope>
</reference>
<reference key="5">
    <citation type="journal article" date="2007" name="Science">
        <title>The evolution of selfing in Arabidopsis thaliana.</title>
        <authorList>
            <person name="Tang C."/>
            <person name="Toomajian C."/>
            <person name="Sherman-Broyles S."/>
            <person name="Plagnol V."/>
            <person name="Guo Y.-L."/>
            <person name="Hu T.T."/>
            <person name="Clark R.M."/>
            <person name="Nasrallah J.B."/>
            <person name="Weigel D."/>
            <person name="Nordborg M."/>
        </authorList>
    </citation>
    <scope>FUNCTION</scope>
</reference>
<comment type="function">
    <text evidence="9 10 11 13">Female specificity determinant of self-incompatibility.</text>
</comment>
<comment type="catalytic activity">
    <reaction>
        <text>L-seryl-[protein] + ATP = O-phospho-L-seryl-[protein] + ADP + H(+)</text>
        <dbReference type="Rhea" id="RHEA:17989"/>
        <dbReference type="Rhea" id="RHEA-COMP:9863"/>
        <dbReference type="Rhea" id="RHEA-COMP:11604"/>
        <dbReference type="ChEBI" id="CHEBI:15378"/>
        <dbReference type="ChEBI" id="CHEBI:29999"/>
        <dbReference type="ChEBI" id="CHEBI:30616"/>
        <dbReference type="ChEBI" id="CHEBI:83421"/>
        <dbReference type="ChEBI" id="CHEBI:456216"/>
        <dbReference type="EC" id="2.7.11.1"/>
    </reaction>
</comment>
<comment type="catalytic activity">
    <reaction>
        <text>L-threonyl-[protein] + ATP = O-phospho-L-threonyl-[protein] + ADP + H(+)</text>
        <dbReference type="Rhea" id="RHEA:46608"/>
        <dbReference type="Rhea" id="RHEA-COMP:11060"/>
        <dbReference type="Rhea" id="RHEA-COMP:11605"/>
        <dbReference type="ChEBI" id="CHEBI:15378"/>
        <dbReference type="ChEBI" id="CHEBI:30013"/>
        <dbReference type="ChEBI" id="CHEBI:30616"/>
        <dbReference type="ChEBI" id="CHEBI:61977"/>
        <dbReference type="ChEBI" id="CHEBI:456216"/>
        <dbReference type="EC" id="2.7.11.1"/>
    </reaction>
</comment>
<comment type="subcellular location">
    <subcellularLocation>
        <location evidence="1">Cell membrane</location>
        <topology evidence="1">Single-pass type I membrane protein</topology>
    </subcellularLocation>
</comment>
<comment type="similarity">
    <text evidence="5">Belongs to the protein kinase superfamily. Ser/Thr protein kinase family.</text>
</comment>
<comment type="caution">
    <text evidence="14">Has been shown to be a pseudogene in cv. Columbia (AC P0DH87) due to a frameshift mutation that introduces a premature stop codon in this strain. The sequence shown is from strains cv. Pog-0 and cv. Wei-1.</text>
</comment>
<comment type="online information" name="Protein Spotlight">
    <link uri="https://www.proteinspotlight.org/back_issues/128"/>
    <text>Do it yourself - Issue 128 of May 2011</text>
</comment>
<gene>
    <name type="primary">SRK</name>
</gene>
<proteinExistence type="evidence at transcript level"/>
<protein>
    <recommendedName>
        <fullName>G-type lectin S-receptor-like serine/threonine-protein kinase SRK</fullName>
        <ecNumber>2.7.11.1</ecNumber>
    </recommendedName>
</protein>
<evidence type="ECO:0000250" key="1"/>
<evidence type="ECO:0000250" key="2">
    <source>
        <dbReference type="UniProtKB" id="Q9LPZ9"/>
    </source>
</evidence>
<evidence type="ECO:0000255" key="3"/>
<evidence type="ECO:0000255" key="4">
    <source>
        <dbReference type="PROSITE-ProRule" id="PRU00038"/>
    </source>
</evidence>
<evidence type="ECO:0000255" key="5">
    <source>
        <dbReference type="PROSITE-ProRule" id="PRU00159"/>
    </source>
</evidence>
<evidence type="ECO:0000255" key="6">
    <source>
        <dbReference type="PROSITE-ProRule" id="PRU00315"/>
    </source>
</evidence>
<evidence type="ECO:0000255" key="7">
    <source>
        <dbReference type="PROSITE-ProRule" id="PRU10027"/>
    </source>
</evidence>
<evidence type="ECO:0000256" key="8">
    <source>
        <dbReference type="SAM" id="MobiDB-lite"/>
    </source>
</evidence>
<evidence type="ECO:0000269" key="9">
    <source>
    </source>
</evidence>
<evidence type="ECO:0000269" key="10">
    <source>
    </source>
</evidence>
<evidence type="ECO:0000269" key="11">
    <source>
    </source>
</evidence>
<evidence type="ECO:0000269" key="12">
    <source>
    </source>
</evidence>
<evidence type="ECO:0000269" key="13">
    <source>
    </source>
</evidence>
<evidence type="ECO:0000305" key="14"/>
<accession>P0DH86</accession>
<accession>B0F2A9</accession>
<accession>B0F2B0</accession>
<accession>D6NTN9</accession>
<accession>D6NTP0</accession>
<accession>D6NTP1</accession>
<accession>D6NTP2</accession>
<accession>D6NTP6</accession>
<accession>D6NTP7</accession>
<accession>D6NTP8</accession>
<accession>O81904</accession>
<keyword id="KW-0067">ATP-binding</keyword>
<keyword id="KW-1003">Cell membrane</keyword>
<keyword id="KW-1015">Disulfide bond</keyword>
<keyword id="KW-0325">Glycoprotein</keyword>
<keyword id="KW-0418">Kinase</keyword>
<keyword id="KW-0430">Lectin</keyword>
<keyword id="KW-0472">Membrane</keyword>
<keyword id="KW-0547">Nucleotide-binding</keyword>
<keyword id="KW-0597">Phosphoprotein</keyword>
<keyword id="KW-0675">Receptor</keyword>
<keyword id="KW-0723">Serine/threonine-protein kinase</keyword>
<keyword id="KW-0732">Signal</keyword>
<keyword id="KW-0808">Transferase</keyword>
<keyword id="KW-0812">Transmembrane</keyword>
<keyword id="KW-1133">Transmembrane helix</keyword>